<protein>
    <recommendedName>
        <fullName>Outer membrane lipoprotein omp19</fullName>
    </recommendedName>
    <alternativeName>
        <fullName>18 kDa immunoreactive antigen</fullName>
    </alternativeName>
    <alternativeName>
        <fullName>19 kDa OMP</fullName>
    </alternativeName>
    <alternativeName>
        <fullName>Minor outer membrane protein omp19</fullName>
    </alternativeName>
</protein>
<feature type="signal peptide" evidence="2">
    <location>
        <begin position="1"/>
        <end position="20"/>
    </location>
</feature>
<feature type="chain" id="PRO_0000096164" description="Outer membrane lipoprotein omp19">
    <location>
        <begin position="21"/>
        <end position="177"/>
    </location>
</feature>
<feature type="region of interest" description="Disordered" evidence="1">
    <location>
        <begin position="28"/>
        <end position="79"/>
    </location>
</feature>
<feature type="compositionally biased region" description="Polar residues" evidence="1">
    <location>
        <begin position="50"/>
        <end position="77"/>
    </location>
</feature>
<feature type="lipid moiety-binding region" description="N-palmitoyl cysteine" evidence="2">
    <location>
        <position position="21"/>
    </location>
</feature>
<feature type="lipid moiety-binding region" description="S-diacylglycerol cysteine" evidence="2">
    <location>
        <position position="21"/>
    </location>
</feature>
<feature type="sequence conflict" description="In Ref. 1; AAB04100." evidence="2" ref="1">
    <original>SR</original>
    <variation>LG</variation>
    <location>
        <begin position="176"/>
        <end position="177"/>
    </location>
</feature>
<feature type="turn" evidence="3">
    <location>
        <begin position="89"/>
        <end position="92"/>
    </location>
</feature>
<feature type="strand" evidence="3">
    <location>
        <begin position="94"/>
        <end position="99"/>
    </location>
</feature>
<feature type="strand" evidence="3">
    <location>
        <begin position="104"/>
        <end position="109"/>
    </location>
</feature>
<feature type="strand" evidence="3">
    <location>
        <begin position="117"/>
        <end position="119"/>
    </location>
</feature>
<feature type="strand" evidence="3">
    <location>
        <begin position="121"/>
        <end position="124"/>
    </location>
</feature>
<feature type="helix" evidence="3">
    <location>
        <begin position="127"/>
        <end position="131"/>
    </location>
</feature>
<feature type="strand" evidence="3">
    <location>
        <begin position="134"/>
        <end position="138"/>
    </location>
</feature>
<feature type="strand" evidence="3">
    <location>
        <begin position="141"/>
        <end position="145"/>
    </location>
</feature>
<feature type="strand" evidence="3">
    <location>
        <begin position="147"/>
        <end position="149"/>
    </location>
</feature>
<feature type="strand" evidence="3">
    <location>
        <begin position="151"/>
        <end position="159"/>
    </location>
</feature>
<feature type="strand" evidence="3">
    <location>
        <begin position="162"/>
        <end position="167"/>
    </location>
</feature>
<feature type="strand" evidence="3">
    <location>
        <begin position="172"/>
        <end position="177"/>
    </location>
</feature>
<reference key="1">
    <citation type="journal article" date="1997" name="Microb. Pathog.">
        <title>Cloning and nucleotide sequence analysis of a Brucella abortus gene encoding an 18 kDa immunoreactive protein.</title>
        <authorList>
            <person name="Kovach M.E."/>
            <person name="Elzer P.H."/>
            <person name="Robertson G.T."/>
            <person name="Chirhart-Gilleland R.L."/>
            <person name="Christensen M.A."/>
            <person name="Peterson K.M."/>
            <person name="Roop R.M. II"/>
        </authorList>
    </citation>
    <scope>NUCLEOTIDE SEQUENCE [GENOMIC DNA]</scope>
</reference>
<reference key="2">
    <citation type="journal article" date="2005" name="Infect. Immun.">
        <title>Whole-genome analyses of speciation events in pathogenic Brucellae.</title>
        <authorList>
            <person name="Chain P.S."/>
            <person name="Comerci D.J."/>
            <person name="Tolmasky M.E."/>
            <person name="Larimer F.W."/>
            <person name="Malfatti S.A."/>
            <person name="Vergez L.M."/>
            <person name="Aguero F."/>
            <person name="Land M.L."/>
            <person name="Ugalde R.A."/>
            <person name="Garcia E."/>
        </authorList>
    </citation>
    <scope>NUCLEOTIDE SEQUENCE [LARGE SCALE GENOMIC DNA]</scope>
    <source>
        <strain>2308</strain>
    </source>
</reference>
<accession>Q2YLR6</accession>
<accession>P0A3P3</accession>
<accession>Q44663</accession>
<accession>Q44699</accession>
<accession>Q57AW8</accession>
<gene>
    <name type="primary">omp19</name>
    <name type="ordered locus">BAB1_1930</name>
</gene>
<name>OMP19_BRUA2</name>
<organism>
    <name type="scientific">Brucella abortus (strain 2308)</name>
    <dbReference type="NCBI Taxonomy" id="359391"/>
    <lineage>
        <taxon>Bacteria</taxon>
        <taxon>Pseudomonadati</taxon>
        <taxon>Pseudomonadota</taxon>
        <taxon>Alphaproteobacteria</taxon>
        <taxon>Hyphomicrobiales</taxon>
        <taxon>Brucellaceae</taxon>
        <taxon>Brucella/Ochrobactrum group</taxon>
        <taxon>Brucella</taxon>
    </lineage>
</organism>
<comment type="subcellular location">
    <subcellularLocation>
        <location>Cell outer membrane</location>
        <topology>Lipid-anchor</topology>
    </subcellularLocation>
</comment>
<comment type="miscellaneous">
    <text>Elicits an immune response in humans, mice, sheep and goats infected with B.melitensis or B.abortus, but not in B.abortus-infected cattle.</text>
</comment>
<comment type="similarity">
    <text evidence="2">Belongs to the rhizobiaceae omp19 lipoprotein family.</text>
</comment>
<proteinExistence type="evidence at protein level"/>
<sequence length="177" mass="17604">MGISKASLLSLAAAGIVLAGCQSSRLGNLDNVSPPPPPAPVNAVPAGTVQKGNLDSPTQFPNAPSTDMSAQSGTQVASLPPASAPDLTPGAVAGVWNASLGGQSCKIATPQTKYGQGYRAGPLRCPGELANLASWAVNGKQLVLYDANGGTVASLYSSGQGRFDGQTTGGQAVTLSR</sequence>
<dbReference type="EMBL" id="U35742">
    <property type="protein sequence ID" value="AAB04100.1"/>
    <property type="molecule type" value="Genomic_DNA"/>
</dbReference>
<dbReference type="EMBL" id="AM040264">
    <property type="protein sequence ID" value="CAJ11886.1"/>
    <property type="molecule type" value="Genomic_DNA"/>
</dbReference>
<dbReference type="RefSeq" id="WP_002964998.1">
    <property type="nucleotide sequence ID" value="NZ_KN046823.1"/>
</dbReference>
<dbReference type="PDB" id="7MHW">
    <property type="method" value="X-ray"/>
    <property type="resolution" value="2.55 A"/>
    <property type="chains" value="A=77-177"/>
</dbReference>
<dbReference type="PDBsum" id="7MHW"/>
<dbReference type="SMR" id="Q2YLR6"/>
<dbReference type="STRING" id="359391.BAB1_1930"/>
<dbReference type="KEGG" id="bmf:BAB1_1930"/>
<dbReference type="PATRIC" id="fig|359391.11.peg.1170"/>
<dbReference type="HOGENOM" id="CLU_103254_0_0_5"/>
<dbReference type="PRO" id="PR:Q2YLR6"/>
<dbReference type="Proteomes" id="UP000002719">
    <property type="component" value="Chromosome I"/>
</dbReference>
<dbReference type="GO" id="GO:0009279">
    <property type="term" value="C:cell outer membrane"/>
    <property type="evidence" value="ECO:0007669"/>
    <property type="project" value="UniProtKB-SubCell"/>
</dbReference>
<dbReference type="GO" id="GO:0004866">
    <property type="term" value="F:endopeptidase inhibitor activity"/>
    <property type="evidence" value="ECO:0007669"/>
    <property type="project" value="InterPro"/>
</dbReference>
<dbReference type="GO" id="GO:0050778">
    <property type="term" value="P:positive regulation of immune response"/>
    <property type="evidence" value="ECO:0000314"/>
    <property type="project" value="DisProt"/>
</dbReference>
<dbReference type="Gene3D" id="2.40.128.10">
    <property type="match status" value="1"/>
</dbReference>
<dbReference type="InterPro" id="IPR021140">
    <property type="entry name" value="Inh/Omp19"/>
</dbReference>
<dbReference type="InterPro" id="IPR010571">
    <property type="entry name" value="OM_lipoprot_Omp19_bac"/>
</dbReference>
<dbReference type="InterPro" id="IPR016085">
    <property type="entry name" value="Protease_inh_b-brl_dom"/>
</dbReference>
<dbReference type="Pfam" id="PF02974">
    <property type="entry name" value="Inh"/>
    <property type="match status" value="1"/>
</dbReference>
<dbReference type="PIRSF" id="PIRSF034005">
    <property type="entry name" value="OM_lipoprot_Omp19_bac"/>
    <property type="match status" value="1"/>
</dbReference>
<dbReference type="SUPFAM" id="SSF50882">
    <property type="entry name" value="beta-Barrel protease inhibitors"/>
    <property type="match status" value="1"/>
</dbReference>
<dbReference type="PROSITE" id="PS51257">
    <property type="entry name" value="PROKAR_LIPOPROTEIN"/>
    <property type="match status" value="1"/>
</dbReference>
<keyword id="KW-0002">3D-structure</keyword>
<keyword id="KW-0998">Cell outer membrane</keyword>
<keyword id="KW-0449">Lipoprotein</keyword>
<keyword id="KW-0472">Membrane</keyword>
<keyword id="KW-0564">Palmitate</keyword>
<keyword id="KW-1185">Reference proteome</keyword>
<keyword id="KW-0732">Signal</keyword>
<evidence type="ECO:0000256" key="1">
    <source>
        <dbReference type="SAM" id="MobiDB-lite"/>
    </source>
</evidence>
<evidence type="ECO:0000305" key="2"/>
<evidence type="ECO:0007829" key="3">
    <source>
        <dbReference type="PDB" id="7MHW"/>
    </source>
</evidence>